<accession>Q8Z3V1</accession>
<dbReference type="EC" id="3.1.-.-" evidence="1"/>
<dbReference type="EMBL" id="AL513382">
    <property type="protein sequence ID" value="CAD02921.1"/>
    <property type="molecule type" value="Genomic_DNA"/>
</dbReference>
<dbReference type="EMBL" id="AE014613">
    <property type="protein sequence ID" value="AAO70561.1"/>
    <property type="molecule type" value="Genomic_DNA"/>
</dbReference>
<dbReference type="RefSeq" id="NP_457489.1">
    <property type="nucleotide sequence ID" value="NC_003198.1"/>
</dbReference>
<dbReference type="SMR" id="Q8Z3V1"/>
<dbReference type="STRING" id="220341.gene:17587123"/>
<dbReference type="KEGG" id="stt:t3009"/>
<dbReference type="KEGG" id="sty:STY3250"/>
<dbReference type="PATRIC" id="fig|220341.7.peg.3314"/>
<dbReference type="eggNOG" id="COG0816">
    <property type="taxonomic scope" value="Bacteria"/>
</dbReference>
<dbReference type="HOGENOM" id="CLU_098240_3_0_6"/>
<dbReference type="OMA" id="PMGWTAQ"/>
<dbReference type="OrthoDB" id="9796140at2"/>
<dbReference type="Proteomes" id="UP000000541">
    <property type="component" value="Chromosome"/>
</dbReference>
<dbReference type="Proteomes" id="UP000002670">
    <property type="component" value="Chromosome"/>
</dbReference>
<dbReference type="GO" id="GO:0005829">
    <property type="term" value="C:cytosol"/>
    <property type="evidence" value="ECO:0007669"/>
    <property type="project" value="TreeGrafter"/>
</dbReference>
<dbReference type="GO" id="GO:0004518">
    <property type="term" value="F:nuclease activity"/>
    <property type="evidence" value="ECO:0007669"/>
    <property type="project" value="UniProtKB-KW"/>
</dbReference>
<dbReference type="GO" id="GO:0000967">
    <property type="term" value="P:rRNA 5'-end processing"/>
    <property type="evidence" value="ECO:0007669"/>
    <property type="project" value="UniProtKB-UniRule"/>
</dbReference>
<dbReference type="CDD" id="cd16964">
    <property type="entry name" value="YqgF"/>
    <property type="match status" value="1"/>
</dbReference>
<dbReference type="FunFam" id="3.30.420.140:FF:000002">
    <property type="entry name" value="Putative pre-16S rRNA nuclease"/>
    <property type="match status" value="1"/>
</dbReference>
<dbReference type="Gene3D" id="3.30.420.140">
    <property type="entry name" value="YqgF/RNase H-like domain"/>
    <property type="match status" value="1"/>
</dbReference>
<dbReference type="HAMAP" id="MF_00651">
    <property type="entry name" value="Nuclease_YqgF"/>
    <property type="match status" value="1"/>
</dbReference>
<dbReference type="InterPro" id="IPR012337">
    <property type="entry name" value="RNaseH-like_sf"/>
</dbReference>
<dbReference type="InterPro" id="IPR005227">
    <property type="entry name" value="YqgF"/>
</dbReference>
<dbReference type="InterPro" id="IPR006641">
    <property type="entry name" value="YqgF/RNaseH-like_dom"/>
</dbReference>
<dbReference type="InterPro" id="IPR037027">
    <property type="entry name" value="YqgF/RNaseH-like_dom_sf"/>
</dbReference>
<dbReference type="NCBIfam" id="TIGR00250">
    <property type="entry name" value="RNAse_H_YqgF"/>
    <property type="match status" value="1"/>
</dbReference>
<dbReference type="PANTHER" id="PTHR33317">
    <property type="entry name" value="POLYNUCLEOTIDYL TRANSFERASE, RIBONUCLEASE H-LIKE SUPERFAMILY PROTEIN"/>
    <property type="match status" value="1"/>
</dbReference>
<dbReference type="PANTHER" id="PTHR33317:SF4">
    <property type="entry name" value="POLYNUCLEOTIDYL TRANSFERASE, RIBONUCLEASE H-LIKE SUPERFAMILY PROTEIN"/>
    <property type="match status" value="1"/>
</dbReference>
<dbReference type="Pfam" id="PF03652">
    <property type="entry name" value="RuvX"/>
    <property type="match status" value="1"/>
</dbReference>
<dbReference type="SMART" id="SM00732">
    <property type="entry name" value="YqgFc"/>
    <property type="match status" value="1"/>
</dbReference>
<dbReference type="SUPFAM" id="SSF53098">
    <property type="entry name" value="Ribonuclease H-like"/>
    <property type="match status" value="1"/>
</dbReference>
<proteinExistence type="inferred from homology"/>
<reference key="1">
    <citation type="journal article" date="2001" name="Nature">
        <title>Complete genome sequence of a multiple drug resistant Salmonella enterica serovar Typhi CT18.</title>
        <authorList>
            <person name="Parkhill J."/>
            <person name="Dougan G."/>
            <person name="James K.D."/>
            <person name="Thomson N.R."/>
            <person name="Pickard D."/>
            <person name="Wain J."/>
            <person name="Churcher C.M."/>
            <person name="Mungall K.L."/>
            <person name="Bentley S.D."/>
            <person name="Holden M.T.G."/>
            <person name="Sebaihia M."/>
            <person name="Baker S."/>
            <person name="Basham D."/>
            <person name="Brooks K."/>
            <person name="Chillingworth T."/>
            <person name="Connerton P."/>
            <person name="Cronin A."/>
            <person name="Davis P."/>
            <person name="Davies R.M."/>
            <person name="Dowd L."/>
            <person name="White N."/>
            <person name="Farrar J."/>
            <person name="Feltwell T."/>
            <person name="Hamlin N."/>
            <person name="Haque A."/>
            <person name="Hien T.T."/>
            <person name="Holroyd S."/>
            <person name="Jagels K."/>
            <person name="Krogh A."/>
            <person name="Larsen T.S."/>
            <person name="Leather S."/>
            <person name="Moule S."/>
            <person name="O'Gaora P."/>
            <person name="Parry C."/>
            <person name="Quail M.A."/>
            <person name="Rutherford K.M."/>
            <person name="Simmonds M."/>
            <person name="Skelton J."/>
            <person name="Stevens K."/>
            <person name="Whitehead S."/>
            <person name="Barrell B.G."/>
        </authorList>
    </citation>
    <scope>NUCLEOTIDE SEQUENCE [LARGE SCALE GENOMIC DNA]</scope>
    <source>
        <strain>CT18</strain>
    </source>
</reference>
<reference key="2">
    <citation type="journal article" date="2003" name="J. Bacteriol.">
        <title>Comparative genomics of Salmonella enterica serovar Typhi strains Ty2 and CT18.</title>
        <authorList>
            <person name="Deng W."/>
            <person name="Liou S.-R."/>
            <person name="Plunkett G. III"/>
            <person name="Mayhew G.F."/>
            <person name="Rose D.J."/>
            <person name="Burland V."/>
            <person name="Kodoyianni V."/>
            <person name="Schwartz D.C."/>
            <person name="Blattner F.R."/>
        </authorList>
    </citation>
    <scope>NUCLEOTIDE SEQUENCE [LARGE SCALE GENOMIC DNA]</scope>
    <source>
        <strain>ATCC 700931 / Ty2</strain>
    </source>
</reference>
<reference key="3">
    <citation type="journal article" date="2004" name="Genetics">
        <title>Insertions of mini-Tn10 transposon T-POP in Salmonella enterica sv. typhi.</title>
        <authorList>
            <person name="Hidalgo A.A."/>
            <person name="Trombert A.N."/>
            <person name="Castro-Alonso J.C."/>
            <person name="Santiviago C.A."/>
            <person name="Tesser B.R."/>
            <person name="Youderian P."/>
            <person name="Mora G.C."/>
        </authorList>
    </citation>
    <scope>DISRUPTION PHENOTYPE</scope>
    <source>
        <strain>STH2370</strain>
    </source>
</reference>
<sequence length="138" mass="15218">MSDTLLAFDFGTKSIGVAIGQRITGTARPLPAIKAQDGTPDWTLIERLLKEWQPDEIIVGLPLNMDGTEQPLTARARKFANRIHGRFGVTVTLHDERLSTVEARSGLFERGGYRALNKGKVDSASAVIILESYFEQGY</sequence>
<protein>
    <recommendedName>
        <fullName evidence="1">Putative pre-16S rRNA nuclease</fullName>
        <ecNumber evidence="1">3.1.-.-</ecNumber>
    </recommendedName>
</protein>
<comment type="function">
    <text evidence="1">Could be a nuclease involved in processing of the 5'-end of pre-16S rRNA.</text>
</comment>
<comment type="subcellular location">
    <subcellularLocation>
        <location evidence="1">Cytoplasm</location>
    </subcellularLocation>
</comment>
<comment type="disruption phenotype">
    <text evidence="2">Essential, it cannot be disrupted; cell division is arrested and cells form unseparated doublets with well-defined septa.</text>
</comment>
<comment type="similarity">
    <text evidence="1">Belongs to the YqgF nuclease family.</text>
</comment>
<feature type="chain" id="PRO_0000172132" description="Putative pre-16S rRNA nuclease">
    <location>
        <begin position="1"/>
        <end position="138"/>
    </location>
</feature>
<evidence type="ECO:0000255" key="1">
    <source>
        <dbReference type="HAMAP-Rule" id="MF_00651"/>
    </source>
</evidence>
<evidence type="ECO:0000269" key="2">
    <source>
    </source>
</evidence>
<name>YQGF_SALTI</name>
<gene>
    <name evidence="1" type="primary">yqgF</name>
    <name type="ordered locus">STY3250</name>
    <name type="ordered locus">t3009</name>
</gene>
<organism>
    <name type="scientific">Salmonella typhi</name>
    <dbReference type="NCBI Taxonomy" id="90370"/>
    <lineage>
        <taxon>Bacteria</taxon>
        <taxon>Pseudomonadati</taxon>
        <taxon>Pseudomonadota</taxon>
        <taxon>Gammaproteobacteria</taxon>
        <taxon>Enterobacterales</taxon>
        <taxon>Enterobacteriaceae</taxon>
        <taxon>Salmonella</taxon>
    </lineage>
</organism>
<keyword id="KW-0963">Cytoplasm</keyword>
<keyword id="KW-0378">Hydrolase</keyword>
<keyword id="KW-0540">Nuclease</keyword>
<keyword id="KW-0690">Ribosome biogenesis</keyword>